<reference key="1">
    <citation type="submission" date="2007-11" db="EMBL/GenBank/DDBJ databases">
        <title>Complete sequence of Delftia acidovorans DSM 14801 / SPH-1.</title>
        <authorList>
            <person name="Copeland A."/>
            <person name="Lucas S."/>
            <person name="Lapidus A."/>
            <person name="Barry K."/>
            <person name="Glavina del Rio T."/>
            <person name="Dalin E."/>
            <person name="Tice H."/>
            <person name="Pitluck S."/>
            <person name="Lowry S."/>
            <person name="Clum A."/>
            <person name="Schmutz J."/>
            <person name="Larimer F."/>
            <person name="Land M."/>
            <person name="Hauser L."/>
            <person name="Kyrpides N."/>
            <person name="Kim E."/>
            <person name="Schleheck D."/>
            <person name="Richardson P."/>
        </authorList>
    </citation>
    <scope>NUCLEOTIDE SEQUENCE [LARGE SCALE GENOMIC DNA]</scope>
    <source>
        <strain>DSM 14801 / SPH-1</strain>
    </source>
</reference>
<feature type="chain" id="PRO_1000124493" description="Transcriptional repressor NrdR">
    <location>
        <begin position="1"/>
        <end position="151"/>
    </location>
</feature>
<feature type="domain" description="ATP-cone" evidence="1">
    <location>
        <begin position="49"/>
        <end position="139"/>
    </location>
</feature>
<feature type="zinc finger region" evidence="1">
    <location>
        <begin position="3"/>
        <end position="34"/>
    </location>
</feature>
<proteinExistence type="inferred from homology"/>
<keyword id="KW-0067">ATP-binding</keyword>
<keyword id="KW-0238">DNA-binding</keyword>
<keyword id="KW-0479">Metal-binding</keyword>
<keyword id="KW-0547">Nucleotide-binding</keyword>
<keyword id="KW-1185">Reference proteome</keyword>
<keyword id="KW-0678">Repressor</keyword>
<keyword id="KW-0804">Transcription</keyword>
<keyword id="KW-0805">Transcription regulation</keyword>
<keyword id="KW-0862">Zinc</keyword>
<keyword id="KW-0863">Zinc-finger</keyword>
<organism>
    <name type="scientific">Delftia acidovorans (strain DSM 14801 / SPH-1)</name>
    <dbReference type="NCBI Taxonomy" id="398578"/>
    <lineage>
        <taxon>Bacteria</taxon>
        <taxon>Pseudomonadati</taxon>
        <taxon>Pseudomonadota</taxon>
        <taxon>Betaproteobacteria</taxon>
        <taxon>Burkholderiales</taxon>
        <taxon>Comamonadaceae</taxon>
        <taxon>Delftia</taxon>
    </lineage>
</organism>
<gene>
    <name evidence="1" type="primary">nrdR</name>
    <name type="ordered locus">Daci_4956</name>
</gene>
<protein>
    <recommendedName>
        <fullName evidence="1">Transcriptional repressor NrdR</fullName>
    </recommendedName>
</protein>
<name>NRDR_DELAS</name>
<dbReference type="EMBL" id="CP000884">
    <property type="protein sequence ID" value="ABX37585.1"/>
    <property type="molecule type" value="Genomic_DNA"/>
</dbReference>
<dbReference type="RefSeq" id="WP_012206755.1">
    <property type="nucleotide sequence ID" value="NC_010002.1"/>
</dbReference>
<dbReference type="SMR" id="A9BMP0"/>
<dbReference type="STRING" id="398578.Daci_4956"/>
<dbReference type="GeneID" id="94691069"/>
<dbReference type="KEGG" id="dac:Daci_4956"/>
<dbReference type="eggNOG" id="COG1327">
    <property type="taxonomic scope" value="Bacteria"/>
</dbReference>
<dbReference type="HOGENOM" id="CLU_108412_0_0_4"/>
<dbReference type="Proteomes" id="UP000000784">
    <property type="component" value="Chromosome"/>
</dbReference>
<dbReference type="GO" id="GO:0005524">
    <property type="term" value="F:ATP binding"/>
    <property type="evidence" value="ECO:0007669"/>
    <property type="project" value="UniProtKB-KW"/>
</dbReference>
<dbReference type="GO" id="GO:0003677">
    <property type="term" value="F:DNA binding"/>
    <property type="evidence" value="ECO:0007669"/>
    <property type="project" value="UniProtKB-KW"/>
</dbReference>
<dbReference type="GO" id="GO:0008270">
    <property type="term" value="F:zinc ion binding"/>
    <property type="evidence" value="ECO:0007669"/>
    <property type="project" value="UniProtKB-UniRule"/>
</dbReference>
<dbReference type="GO" id="GO:0045892">
    <property type="term" value="P:negative regulation of DNA-templated transcription"/>
    <property type="evidence" value="ECO:0007669"/>
    <property type="project" value="UniProtKB-UniRule"/>
</dbReference>
<dbReference type="HAMAP" id="MF_00440">
    <property type="entry name" value="NrdR"/>
    <property type="match status" value="1"/>
</dbReference>
<dbReference type="InterPro" id="IPR005144">
    <property type="entry name" value="ATP-cone_dom"/>
</dbReference>
<dbReference type="InterPro" id="IPR055173">
    <property type="entry name" value="NrdR-like_N"/>
</dbReference>
<dbReference type="InterPro" id="IPR003796">
    <property type="entry name" value="RNR_NrdR-like"/>
</dbReference>
<dbReference type="NCBIfam" id="TIGR00244">
    <property type="entry name" value="transcriptional regulator NrdR"/>
    <property type="match status" value="1"/>
</dbReference>
<dbReference type="PANTHER" id="PTHR30455">
    <property type="entry name" value="TRANSCRIPTIONAL REPRESSOR NRDR"/>
    <property type="match status" value="1"/>
</dbReference>
<dbReference type="PANTHER" id="PTHR30455:SF2">
    <property type="entry name" value="TRANSCRIPTIONAL REPRESSOR NRDR"/>
    <property type="match status" value="1"/>
</dbReference>
<dbReference type="Pfam" id="PF03477">
    <property type="entry name" value="ATP-cone"/>
    <property type="match status" value="1"/>
</dbReference>
<dbReference type="Pfam" id="PF22811">
    <property type="entry name" value="Zn_ribbon_NrdR"/>
    <property type="match status" value="1"/>
</dbReference>
<dbReference type="PROSITE" id="PS51161">
    <property type="entry name" value="ATP_CONE"/>
    <property type="match status" value="1"/>
</dbReference>
<evidence type="ECO:0000255" key="1">
    <source>
        <dbReference type="HAMAP-Rule" id="MF_00440"/>
    </source>
</evidence>
<sequence length="151" mass="17652">MKCPFCSHPDTQVVETREAEDGGFIRRRRQCGGCDKRFTTYERPEVSFPAIVKKDGRRIEYERAKLLGSFKIALRKRPVSTEQIDAAIERIEERLRNLGEREVLSSRLGEMVMRELKLLDKVGYIRYASVYRSFEDVDDFKNVMDEVRNPG</sequence>
<comment type="function">
    <text evidence="1">Negatively regulates transcription of bacterial ribonucleotide reductase nrd genes and operons by binding to NrdR-boxes.</text>
</comment>
<comment type="cofactor">
    <cofactor evidence="1">
        <name>Zn(2+)</name>
        <dbReference type="ChEBI" id="CHEBI:29105"/>
    </cofactor>
    <text evidence="1">Binds 1 zinc ion.</text>
</comment>
<comment type="similarity">
    <text evidence="1">Belongs to the NrdR family.</text>
</comment>
<accession>A9BMP0</accession>